<comment type="function">
    <text evidence="1">Involved in DNA repair and RecF pathway recombination.</text>
</comment>
<comment type="similarity">
    <text evidence="1">Belongs to the RecO family.</text>
</comment>
<protein>
    <recommendedName>
        <fullName evidence="1">DNA repair protein RecO</fullName>
    </recommendedName>
    <alternativeName>
        <fullName evidence="1">Recombination protein O</fullName>
    </alternativeName>
</protein>
<sequence>MASIRVADEPAFVLHSIPYKETSLILDVFTRQHGRMALIAKGAKRPHSVLRPVLQRFQPLLVSWSGKSELRTLTKSEWVGGMPSLVGDALLCGFYLNELLVKFLAREDDYERLYDRYSETINALSNLEFESKGLEEILRPFELSLLQETGYAAALDRCVETNDSPVFEALYVYQPERGVRPIQVDDPGHWPVLRGKSLLAIAAGDFSDPETLSESKQLMRFLLGLHLQDQVLTTRQILIDLKKI</sequence>
<name>RECO_POLAQ</name>
<reference key="1">
    <citation type="journal article" date="2012" name="Stand. Genomic Sci.">
        <title>Complete genome sequence of Polynucleobacter necessarius subsp. asymbioticus type strain (QLW-P1DMWA-1(T)).</title>
        <authorList>
            <person name="Meincke L."/>
            <person name="Copeland A."/>
            <person name="Lapidus A."/>
            <person name="Lucas S."/>
            <person name="Berry K.W."/>
            <person name="Del Rio T.G."/>
            <person name="Hammon N."/>
            <person name="Dalin E."/>
            <person name="Tice H."/>
            <person name="Pitluck S."/>
            <person name="Richardson P."/>
            <person name="Bruce D."/>
            <person name="Goodwin L."/>
            <person name="Han C."/>
            <person name="Tapia R."/>
            <person name="Detter J.C."/>
            <person name="Schmutz J."/>
            <person name="Brettin T."/>
            <person name="Larimer F."/>
            <person name="Land M."/>
            <person name="Hauser L."/>
            <person name="Kyrpides N.C."/>
            <person name="Ivanova N."/>
            <person name="Goker M."/>
            <person name="Woyke T."/>
            <person name="Wu Q.L."/>
            <person name="Pockl M."/>
            <person name="Hahn M.W."/>
            <person name="Klenk H.P."/>
        </authorList>
    </citation>
    <scope>NUCLEOTIDE SEQUENCE [LARGE SCALE GENOMIC DNA]</scope>
    <source>
        <strain>DSM 18221 / CIP 109841 / QLW-P1DMWA-1</strain>
    </source>
</reference>
<accession>A4SVW4</accession>
<feature type="chain" id="PRO_1000193408" description="DNA repair protein RecO">
    <location>
        <begin position="1"/>
        <end position="244"/>
    </location>
</feature>
<organism>
    <name type="scientific">Polynucleobacter asymbioticus (strain DSM 18221 / CIP 109841 / QLW-P1DMWA-1)</name>
    <name type="common">Polynucleobacter necessarius subsp. asymbioticus</name>
    <dbReference type="NCBI Taxonomy" id="312153"/>
    <lineage>
        <taxon>Bacteria</taxon>
        <taxon>Pseudomonadati</taxon>
        <taxon>Pseudomonadota</taxon>
        <taxon>Betaproteobacteria</taxon>
        <taxon>Burkholderiales</taxon>
        <taxon>Burkholderiaceae</taxon>
        <taxon>Polynucleobacter</taxon>
    </lineage>
</organism>
<keyword id="KW-0227">DNA damage</keyword>
<keyword id="KW-0233">DNA recombination</keyword>
<keyword id="KW-0234">DNA repair</keyword>
<keyword id="KW-1185">Reference proteome</keyword>
<proteinExistence type="inferred from homology"/>
<dbReference type="EMBL" id="CP000655">
    <property type="protein sequence ID" value="ABP33628.1"/>
    <property type="molecule type" value="Genomic_DNA"/>
</dbReference>
<dbReference type="RefSeq" id="WP_011902253.1">
    <property type="nucleotide sequence ID" value="NC_009379.1"/>
</dbReference>
<dbReference type="SMR" id="A4SVW4"/>
<dbReference type="GeneID" id="31480759"/>
<dbReference type="KEGG" id="pnu:Pnuc_0408"/>
<dbReference type="eggNOG" id="COG1381">
    <property type="taxonomic scope" value="Bacteria"/>
</dbReference>
<dbReference type="HOGENOM" id="CLU_066645_1_0_4"/>
<dbReference type="Proteomes" id="UP000000231">
    <property type="component" value="Chromosome"/>
</dbReference>
<dbReference type="GO" id="GO:0043590">
    <property type="term" value="C:bacterial nucleoid"/>
    <property type="evidence" value="ECO:0007669"/>
    <property type="project" value="TreeGrafter"/>
</dbReference>
<dbReference type="GO" id="GO:0006310">
    <property type="term" value="P:DNA recombination"/>
    <property type="evidence" value="ECO:0007669"/>
    <property type="project" value="UniProtKB-UniRule"/>
</dbReference>
<dbReference type="GO" id="GO:0006302">
    <property type="term" value="P:double-strand break repair"/>
    <property type="evidence" value="ECO:0007669"/>
    <property type="project" value="TreeGrafter"/>
</dbReference>
<dbReference type="Gene3D" id="2.40.50.140">
    <property type="entry name" value="Nucleic acid-binding proteins"/>
    <property type="match status" value="1"/>
</dbReference>
<dbReference type="Gene3D" id="1.20.1440.120">
    <property type="entry name" value="Recombination protein O, C-terminal domain"/>
    <property type="match status" value="1"/>
</dbReference>
<dbReference type="HAMAP" id="MF_00201">
    <property type="entry name" value="RecO"/>
    <property type="match status" value="1"/>
</dbReference>
<dbReference type="InterPro" id="IPR037278">
    <property type="entry name" value="ARFGAP/RecO"/>
</dbReference>
<dbReference type="InterPro" id="IPR022572">
    <property type="entry name" value="DNA_rep/recomb_RecO_N"/>
</dbReference>
<dbReference type="InterPro" id="IPR012340">
    <property type="entry name" value="NA-bd_OB-fold"/>
</dbReference>
<dbReference type="InterPro" id="IPR003717">
    <property type="entry name" value="RecO"/>
</dbReference>
<dbReference type="InterPro" id="IPR042242">
    <property type="entry name" value="RecO_C"/>
</dbReference>
<dbReference type="NCBIfam" id="TIGR00613">
    <property type="entry name" value="reco"/>
    <property type="match status" value="1"/>
</dbReference>
<dbReference type="PANTHER" id="PTHR33991">
    <property type="entry name" value="DNA REPAIR PROTEIN RECO"/>
    <property type="match status" value="1"/>
</dbReference>
<dbReference type="PANTHER" id="PTHR33991:SF1">
    <property type="entry name" value="DNA REPAIR PROTEIN RECO"/>
    <property type="match status" value="1"/>
</dbReference>
<dbReference type="Pfam" id="PF02565">
    <property type="entry name" value="RecO_C"/>
    <property type="match status" value="1"/>
</dbReference>
<dbReference type="Pfam" id="PF11967">
    <property type="entry name" value="RecO_N"/>
    <property type="match status" value="1"/>
</dbReference>
<dbReference type="SUPFAM" id="SSF57863">
    <property type="entry name" value="ArfGap/RecO-like zinc finger"/>
    <property type="match status" value="1"/>
</dbReference>
<dbReference type="SUPFAM" id="SSF50249">
    <property type="entry name" value="Nucleic acid-binding proteins"/>
    <property type="match status" value="1"/>
</dbReference>
<gene>
    <name evidence="1" type="primary">recO</name>
    <name type="ordered locus">Pnuc_0408</name>
</gene>
<evidence type="ECO:0000255" key="1">
    <source>
        <dbReference type="HAMAP-Rule" id="MF_00201"/>
    </source>
</evidence>